<dbReference type="EC" id="6.3.5.-" evidence="1"/>
<dbReference type="EMBL" id="CP000270">
    <property type="protein sequence ID" value="ABE28605.1"/>
    <property type="molecule type" value="Genomic_DNA"/>
</dbReference>
<dbReference type="RefSeq" id="WP_011486461.1">
    <property type="nucleotide sequence ID" value="NC_007951.1"/>
</dbReference>
<dbReference type="SMR" id="Q146Y4"/>
<dbReference type="STRING" id="266265.Bxe_A4395"/>
<dbReference type="KEGG" id="bxb:DR64_2070"/>
<dbReference type="KEGG" id="bxe:Bxe_A4395"/>
<dbReference type="PATRIC" id="fig|266265.5.peg.69"/>
<dbReference type="eggNOG" id="COG0064">
    <property type="taxonomic scope" value="Bacteria"/>
</dbReference>
<dbReference type="OrthoDB" id="9804078at2"/>
<dbReference type="Proteomes" id="UP000001817">
    <property type="component" value="Chromosome 1"/>
</dbReference>
<dbReference type="GO" id="GO:0050566">
    <property type="term" value="F:asparaginyl-tRNA synthase (glutamine-hydrolyzing) activity"/>
    <property type="evidence" value="ECO:0007669"/>
    <property type="project" value="RHEA"/>
</dbReference>
<dbReference type="GO" id="GO:0005524">
    <property type="term" value="F:ATP binding"/>
    <property type="evidence" value="ECO:0007669"/>
    <property type="project" value="UniProtKB-KW"/>
</dbReference>
<dbReference type="GO" id="GO:0050567">
    <property type="term" value="F:glutaminyl-tRNA synthase (glutamine-hydrolyzing) activity"/>
    <property type="evidence" value="ECO:0007669"/>
    <property type="project" value="UniProtKB-UniRule"/>
</dbReference>
<dbReference type="GO" id="GO:0070681">
    <property type="term" value="P:glutaminyl-tRNAGln biosynthesis via transamidation"/>
    <property type="evidence" value="ECO:0007669"/>
    <property type="project" value="TreeGrafter"/>
</dbReference>
<dbReference type="GO" id="GO:0006412">
    <property type="term" value="P:translation"/>
    <property type="evidence" value="ECO:0007669"/>
    <property type="project" value="UniProtKB-UniRule"/>
</dbReference>
<dbReference type="FunFam" id="1.10.10.410:FF:000001">
    <property type="entry name" value="Aspartyl/glutamyl-tRNA(Asn/Gln) amidotransferase subunit B"/>
    <property type="match status" value="1"/>
</dbReference>
<dbReference type="FunFam" id="1.10.150.380:FF:000001">
    <property type="entry name" value="Aspartyl/glutamyl-tRNA(Asn/Gln) amidotransferase subunit B"/>
    <property type="match status" value="1"/>
</dbReference>
<dbReference type="Gene3D" id="1.10.10.410">
    <property type="match status" value="1"/>
</dbReference>
<dbReference type="Gene3D" id="1.10.150.380">
    <property type="entry name" value="GatB domain, N-terminal subdomain"/>
    <property type="match status" value="1"/>
</dbReference>
<dbReference type="HAMAP" id="MF_00121">
    <property type="entry name" value="GatB"/>
    <property type="match status" value="1"/>
</dbReference>
<dbReference type="InterPro" id="IPR017959">
    <property type="entry name" value="Asn/Gln-tRNA_amidoTrfase_suB/E"/>
</dbReference>
<dbReference type="InterPro" id="IPR006075">
    <property type="entry name" value="Asn/Gln-tRNA_Trfase_suB/E_cat"/>
</dbReference>
<dbReference type="InterPro" id="IPR018027">
    <property type="entry name" value="Asn/Gln_amidotransferase"/>
</dbReference>
<dbReference type="InterPro" id="IPR003789">
    <property type="entry name" value="Asn/Gln_tRNA_amidoTrase-B-like"/>
</dbReference>
<dbReference type="InterPro" id="IPR004413">
    <property type="entry name" value="GatB"/>
</dbReference>
<dbReference type="InterPro" id="IPR042114">
    <property type="entry name" value="GatB_C_1"/>
</dbReference>
<dbReference type="InterPro" id="IPR023168">
    <property type="entry name" value="GatB_Yqey_C_2"/>
</dbReference>
<dbReference type="InterPro" id="IPR017958">
    <property type="entry name" value="Gln-tRNA_amidoTrfase_suB_CS"/>
</dbReference>
<dbReference type="InterPro" id="IPR014746">
    <property type="entry name" value="Gln_synth/guanido_kin_cat_dom"/>
</dbReference>
<dbReference type="NCBIfam" id="TIGR00133">
    <property type="entry name" value="gatB"/>
    <property type="match status" value="1"/>
</dbReference>
<dbReference type="NCBIfam" id="NF004012">
    <property type="entry name" value="PRK05477.1-2"/>
    <property type="match status" value="1"/>
</dbReference>
<dbReference type="NCBIfam" id="NF004014">
    <property type="entry name" value="PRK05477.1-4"/>
    <property type="match status" value="1"/>
</dbReference>
<dbReference type="NCBIfam" id="NF004015">
    <property type="entry name" value="PRK05477.1-5"/>
    <property type="match status" value="1"/>
</dbReference>
<dbReference type="PANTHER" id="PTHR11659">
    <property type="entry name" value="GLUTAMYL-TRNA GLN AMIDOTRANSFERASE SUBUNIT B MITOCHONDRIAL AND PROKARYOTIC PET112-RELATED"/>
    <property type="match status" value="1"/>
</dbReference>
<dbReference type="PANTHER" id="PTHR11659:SF0">
    <property type="entry name" value="GLUTAMYL-TRNA(GLN) AMIDOTRANSFERASE SUBUNIT B, MITOCHONDRIAL"/>
    <property type="match status" value="1"/>
</dbReference>
<dbReference type="Pfam" id="PF02934">
    <property type="entry name" value="GatB_N"/>
    <property type="match status" value="1"/>
</dbReference>
<dbReference type="Pfam" id="PF02637">
    <property type="entry name" value="GatB_Yqey"/>
    <property type="match status" value="1"/>
</dbReference>
<dbReference type="SMART" id="SM00845">
    <property type="entry name" value="GatB_Yqey"/>
    <property type="match status" value="1"/>
</dbReference>
<dbReference type="SUPFAM" id="SSF89095">
    <property type="entry name" value="GatB/YqeY motif"/>
    <property type="match status" value="1"/>
</dbReference>
<dbReference type="SUPFAM" id="SSF55931">
    <property type="entry name" value="Glutamine synthetase/guanido kinase"/>
    <property type="match status" value="1"/>
</dbReference>
<dbReference type="PROSITE" id="PS01234">
    <property type="entry name" value="GATB"/>
    <property type="match status" value="1"/>
</dbReference>
<gene>
    <name evidence="1" type="primary">gatB</name>
    <name type="ordered locus">Bxeno_A0067</name>
    <name type="ORF">Bxe_A4395</name>
</gene>
<organism>
    <name type="scientific">Paraburkholderia xenovorans (strain LB400)</name>
    <dbReference type="NCBI Taxonomy" id="266265"/>
    <lineage>
        <taxon>Bacteria</taxon>
        <taxon>Pseudomonadati</taxon>
        <taxon>Pseudomonadota</taxon>
        <taxon>Betaproteobacteria</taxon>
        <taxon>Burkholderiales</taxon>
        <taxon>Burkholderiaceae</taxon>
        <taxon>Paraburkholderia</taxon>
    </lineage>
</organism>
<protein>
    <recommendedName>
        <fullName evidence="1">Aspartyl/glutamyl-tRNA(Asn/Gln) amidotransferase subunit B</fullName>
        <shortName evidence="1">Asp/Glu-ADT subunit B</shortName>
        <ecNumber evidence="1">6.3.5.-</ecNumber>
    </recommendedName>
</protein>
<feature type="chain" id="PRO_1000015949" description="Aspartyl/glutamyl-tRNA(Asn/Gln) amidotransferase subunit B">
    <location>
        <begin position="1"/>
        <end position="491"/>
    </location>
</feature>
<name>GATB_PARXL</name>
<comment type="function">
    <text evidence="1">Allows the formation of correctly charged Asn-tRNA(Asn) or Gln-tRNA(Gln) through the transamidation of misacylated Asp-tRNA(Asn) or Glu-tRNA(Gln) in organisms which lack either or both of asparaginyl-tRNA or glutaminyl-tRNA synthetases. The reaction takes place in the presence of glutamine and ATP through an activated phospho-Asp-tRNA(Asn) or phospho-Glu-tRNA(Gln).</text>
</comment>
<comment type="catalytic activity">
    <reaction evidence="1">
        <text>L-glutamyl-tRNA(Gln) + L-glutamine + ATP + H2O = L-glutaminyl-tRNA(Gln) + L-glutamate + ADP + phosphate + H(+)</text>
        <dbReference type="Rhea" id="RHEA:17521"/>
        <dbReference type="Rhea" id="RHEA-COMP:9681"/>
        <dbReference type="Rhea" id="RHEA-COMP:9684"/>
        <dbReference type="ChEBI" id="CHEBI:15377"/>
        <dbReference type="ChEBI" id="CHEBI:15378"/>
        <dbReference type="ChEBI" id="CHEBI:29985"/>
        <dbReference type="ChEBI" id="CHEBI:30616"/>
        <dbReference type="ChEBI" id="CHEBI:43474"/>
        <dbReference type="ChEBI" id="CHEBI:58359"/>
        <dbReference type="ChEBI" id="CHEBI:78520"/>
        <dbReference type="ChEBI" id="CHEBI:78521"/>
        <dbReference type="ChEBI" id="CHEBI:456216"/>
    </reaction>
</comment>
<comment type="catalytic activity">
    <reaction evidence="1">
        <text>L-aspartyl-tRNA(Asn) + L-glutamine + ATP + H2O = L-asparaginyl-tRNA(Asn) + L-glutamate + ADP + phosphate + 2 H(+)</text>
        <dbReference type="Rhea" id="RHEA:14513"/>
        <dbReference type="Rhea" id="RHEA-COMP:9674"/>
        <dbReference type="Rhea" id="RHEA-COMP:9677"/>
        <dbReference type="ChEBI" id="CHEBI:15377"/>
        <dbReference type="ChEBI" id="CHEBI:15378"/>
        <dbReference type="ChEBI" id="CHEBI:29985"/>
        <dbReference type="ChEBI" id="CHEBI:30616"/>
        <dbReference type="ChEBI" id="CHEBI:43474"/>
        <dbReference type="ChEBI" id="CHEBI:58359"/>
        <dbReference type="ChEBI" id="CHEBI:78515"/>
        <dbReference type="ChEBI" id="CHEBI:78516"/>
        <dbReference type="ChEBI" id="CHEBI:456216"/>
    </reaction>
</comment>
<comment type="subunit">
    <text evidence="1">Heterotrimer of A, B and C subunits.</text>
</comment>
<comment type="similarity">
    <text evidence="1">Belongs to the GatB/GatE family. GatB subfamily.</text>
</comment>
<accession>Q146Y4</accession>
<keyword id="KW-0067">ATP-binding</keyword>
<keyword id="KW-0436">Ligase</keyword>
<keyword id="KW-0547">Nucleotide-binding</keyword>
<keyword id="KW-0648">Protein biosynthesis</keyword>
<keyword id="KW-1185">Reference proteome</keyword>
<sequence length="491" mass="53856">MTKQWEVVIGLETHAQLSTHSKIFSGASTQFGAAPNTQACPVDLALPGTLPVMNRGAVERAIQFGLAIGATVAPRSIFARKNYFYPDLPKGYQISQYEIPVVQGGQVTIQVPANEKANTPAYEKVVNLTRAHLEEDAGKSLHEDFAGMTGIDLNRAGTPLLEIVTEPEMRSAAEAVAYAKTLHTLVTWLGICDGNMQEGSFRCDANVSVRPVGQAEFGTRAEIKNLNSFRFLEEAIQYEVRRQIELIEDGGTVVQETRLYDPDKRETRSMRSKEDAHDYRYFPDPDLMPLVIDAAWVERVKSEMPELPVAIQQRFVTQYGLTPYDANVLTSSKAMAAYYEAVVSKLGPANAKAAANWLMGEVSSQLNREDLDIAASPVSSAQLALLLQRIADGTISHKIAKEIFLSIWEEKATDEAATDRIIEAKGLKQISDTGALEAIIDEVLAANQKSVEEFRAGKEKAFNALIGQAMKATKGKANPAQVNELLRKKLS</sequence>
<evidence type="ECO:0000255" key="1">
    <source>
        <dbReference type="HAMAP-Rule" id="MF_00121"/>
    </source>
</evidence>
<reference key="1">
    <citation type="journal article" date="2006" name="Proc. Natl. Acad. Sci. U.S.A.">
        <title>Burkholderia xenovorans LB400 harbors a multi-replicon, 9.73-Mbp genome shaped for versatility.</title>
        <authorList>
            <person name="Chain P.S.G."/>
            <person name="Denef V.J."/>
            <person name="Konstantinidis K.T."/>
            <person name="Vergez L.M."/>
            <person name="Agullo L."/>
            <person name="Reyes V.L."/>
            <person name="Hauser L."/>
            <person name="Cordova M."/>
            <person name="Gomez L."/>
            <person name="Gonzalez M."/>
            <person name="Land M."/>
            <person name="Lao V."/>
            <person name="Larimer F."/>
            <person name="LiPuma J.J."/>
            <person name="Mahenthiralingam E."/>
            <person name="Malfatti S.A."/>
            <person name="Marx C.J."/>
            <person name="Parnell J.J."/>
            <person name="Ramette A."/>
            <person name="Richardson P."/>
            <person name="Seeger M."/>
            <person name="Smith D."/>
            <person name="Spilker T."/>
            <person name="Sul W.J."/>
            <person name="Tsoi T.V."/>
            <person name="Ulrich L.E."/>
            <person name="Zhulin I.B."/>
            <person name="Tiedje J.M."/>
        </authorList>
    </citation>
    <scope>NUCLEOTIDE SEQUENCE [LARGE SCALE GENOMIC DNA]</scope>
    <source>
        <strain>LB400</strain>
    </source>
</reference>
<proteinExistence type="inferred from homology"/>